<reference key="1">
    <citation type="submission" date="2009-07" db="EMBL/GenBank/DDBJ databases">
        <title>Complete sequence of Pectobacterium carotovorum subsp. carotovorum PC1.</title>
        <authorList>
            <consortium name="US DOE Joint Genome Institute"/>
            <person name="Lucas S."/>
            <person name="Copeland A."/>
            <person name="Lapidus A."/>
            <person name="Glavina del Rio T."/>
            <person name="Tice H."/>
            <person name="Bruce D."/>
            <person name="Goodwin L."/>
            <person name="Pitluck S."/>
            <person name="Munk A.C."/>
            <person name="Brettin T."/>
            <person name="Detter J.C."/>
            <person name="Han C."/>
            <person name="Tapia R."/>
            <person name="Larimer F."/>
            <person name="Land M."/>
            <person name="Hauser L."/>
            <person name="Kyrpides N."/>
            <person name="Mikhailova N."/>
            <person name="Balakrishnan V."/>
            <person name="Glasner J."/>
            <person name="Perna N.T."/>
        </authorList>
    </citation>
    <scope>NUCLEOTIDE SEQUENCE [LARGE SCALE GENOMIC DNA]</scope>
    <source>
        <strain>PC1</strain>
    </source>
</reference>
<gene>
    <name evidence="1" type="primary">zntB</name>
    <name type="ordered locus">PC1_2318</name>
</gene>
<name>ZNTB_PECCP</name>
<dbReference type="EMBL" id="CP001657">
    <property type="protein sequence ID" value="ACT13350.1"/>
    <property type="molecule type" value="Genomic_DNA"/>
</dbReference>
<dbReference type="RefSeq" id="WP_015840536.1">
    <property type="nucleotide sequence ID" value="NC_012917.1"/>
</dbReference>
<dbReference type="SMR" id="C6DJ80"/>
<dbReference type="STRING" id="561230.PC1_2318"/>
<dbReference type="GeneID" id="67794311"/>
<dbReference type="KEGG" id="pct:PC1_2318"/>
<dbReference type="eggNOG" id="COG0598">
    <property type="taxonomic scope" value="Bacteria"/>
</dbReference>
<dbReference type="HOGENOM" id="CLU_007127_2_0_6"/>
<dbReference type="OrthoDB" id="9803484at2"/>
<dbReference type="Proteomes" id="UP000002736">
    <property type="component" value="Chromosome"/>
</dbReference>
<dbReference type="GO" id="GO:0005886">
    <property type="term" value="C:plasma membrane"/>
    <property type="evidence" value="ECO:0007669"/>
    <property type="project" value="UniProtKB-SubCell"/>
</dbReference>
<dbReference type="GO" id="GO:0050897">
    <property type="term" value="F:cobalt ion binding"/>
    <property type="evidence" value="ECO:0007669"/>
    <property type="project" value="TreeGrafter"/>
</dbReference>
<dbReference type="GO" id="GO:0015087">
    <property type="term" value="F:cobalt ion transmembrane transporter activity"/>
    <property type="evidence" value="ECO:0007669"/>
    <property type="project" value="TreeGrafter"/>
</dbReference>
<dbReference type="GO" id="GO:0000287">
    <property type="term" value="F:magnesium ion binding"/>
    <property type="evidence" value="ECO:0007669"/>
    <property type="project" value="TreeGrafter"/>
</dbReference>
<dbReference type="GO" id="GO:0015095">
    <property type="term" value="F:magnesium ion transmembrane transporter activity"/>
    <property type="evidence" value="ECO:0007669"/>
    <property type="project" value="TreeGrafter"/>
</dbReference>
<dbReference type="GO" id="GO:0005385">
    <property type="term" value="F:zinc ion transmembrane transporter activity"/>
    <property type="evidence" value="ECO:0007669"/>
    <property type="project" value="UniProtKB-UniRule"/>
</dbReference>
<dbReference type="CDD" id="cd12833">
    <property type="entry name" value="ZntB-like_1"/>
    <property type="match status" value="1"/>
</dbReference>
<dbReference type="Gene3D" id="3.30.460.20">
    <property type="entry name" value="CorA soluble domain-like"/>
    <property type="match status" value="1"/>
</dbReference>
<dbReference type="Gene3D" id="1.20.58.340">
    <property type="entry name" value="Magnesium transport protein CorA, transmembrane region"/>
    <property type="match status" value="2"/>
</dbReference>
<dbReference type="HAMAP" id="MF_01565">
    <property type="entry name" value="ZntB"/>
    <property type="match status" value="1"/>
</dbReference>
<dbReference type="InterPro" id="IPR045861">
    <property type="entry name" value="CorA_cytoplasmic_dom"/>
</dbReference>
<dbReference type="InterPro" id="IPR045863">
    <property type="entry name" value="CorA_TM1_TM2"/>
</dbReference>
<dbReference type="InterPro" id="IPR002523">
    <property type="entry name" value="MgTranspt_CorA/ZnTranspt_ZntB"/>
</dbReference>
<dbReference type="InterPro" id="IPR023714">
    <property type="entry name" value="Zn_transp_ZntB"/>
</dbReference>
<dbReference type="NCBIfam" id="NF007092">
    <property type="entry name" value="PRK09546.1"/>
    <property type="match status" value="1"/>
</dbReference>
<dbReference type="PANTHER" id="PTHR46494">
    <property type="entry name" value="CORA FAMILY METAL ION TRANSPORTER (EUROFUNG)"/>
    <property type="match status" value="1"/>
</dbReference>
<dbReference type="PANTHER" id="PTHR46494:SF3">
    <property type="entry name" value="ZINC TRANSPORT PROTEIN ZNTB"/>
    <property type="match status" value="1"/>
</dbReference>
<dbReference type="Pfam" id="PF01544">
    <property type="entry name" value="CorA"/>
    <property type="match status" value="1"/>
</dbReference>
<dbReference type="SUPFAM" id="SSF143865">
    <property type="entry name" value="CorA soluble domain-like"/>
    <property type="match status" value="1"/>
</dbReference>
<dbReference type="SUPFAM" id="SSF144083">
    <property type="entry name" value="Magnesium transport protein CorA, transmembrane region"/>
    <property type="match status" value="1"/>
</dbReference>
<proteinExistence type="inferred from homology"/>
<organism>
    <name type="scientific">Pectobacterium carotovorum subsp. carotovorum (strain PC1)</name>
    <dbReference type="NCBI Taxonomy" id="561230"/>
    <lineage>
        <taxon>Bacteria</taxon>
        <taxon>Pseudomonadati</taxon>
        <taxon>Pseudomonadota</taxon>
        <taxon>Gammaproteobacteria</taxon>
        <taxon>Enterobacterales</taxon>
        <taxon>Pectobacteriaceae</taxon>
        <taxon>Pectobacterium</taxon>
    </lineage>
</organism>
<sequence length="327" mass="36523">MESFAGKELQHSGAVHAYQLDGKGGITPIGEQDVVNSEKPCWLHLDSTLPASARWLNKTTLVPDSVRNALAGESIRPRVTRLGDGTLITLRSINLNANARPDQLVAVRVFITDKLIISTRRRKVLAIDEILTDLKEGNGPTDSGSWLVSIAESLTDHTSEFIDDLHEKIIDLEDDLLEQKIPPRGELALIRKQLIVLRRYMTPQRDVFSRISGEKLPWMQDDDRRRMQEIADRLGRGLEDLDASIARTTVLSDEITALMTEAMNRRTYTMSLLAMVFLPTTFLTGLFGVNLGGIPGGDAPFGFFTFCLMLVILVGGVAWWLKRSKWL</sequence>
<comment type="function">
    <text evidence="1">Zinc transporter. Acts as a Zn(2+):proton symporter, which likely mediates zinc ion uptake.</text>
</comment>
<comment type="catalytic activity">
    <reaction evidence="1">
        <text>Zn(2+)(out) + H(+)(out) = Zn(2+)(in) + H(+)(in)</text>
        <dbReference type="Rhea" id="RHEA:71195"/>
        <dbReference type="ChEBI" id="CHEBI:15378"/>
        <dbReference type="ChEBI" id="CHEBI:29105"/>
    </reaction>
    <physiologicalReaction direction="left-to-right" evidence="1">
        <dbReference type="Rhea" id="RHEA:71196"/>
    </physiologicalReaction>
</comment>
<comment type="subcellular location">
    <subcellularLocation>
        <location evidence="1">Cell inner membrane</location>
        <topology evidence="1">Multi-pass membrane protein</topology>
    </subcellularLocation>
</comment>
<comment type="similarity">
    <text evidence="1">Belongs to the CorA metal ion transporter (MIT) (TC 1.A.35) family.</text>
</comment>
<feature type="chain" id="PRO_1000215516" description="Zinc transport protein ZntB">
    <location>
        <begin position="1"/>
        <end position="327"/>
    </location>
</feature>
<feature type="topological domain" description="Cytoplasmic" evidence="1">
    <location>
        <begin position="1"/>
        <end position="271"/>
    </location>
</feature>
<feature type="transmembrane region" description="Helical" evidence="1">
    <location>
        <begin position="272"/>
        <end position="292"/>
    </location>
</feature>
<feature type="topological domain" description="Periplasmic" evidence="1">
    <location>
        <begin position="293"/>
        <end position="300"/>
    </location>
</feature>
<feature type="transmembrane region" description="Helical" evidence="1">
    <location>
        <begin position="301"/>
        <end position="321"/>
    </location>
</feature>
<feature type="topological domain" description="Cytoplasmic" evidence="1">
    <location>
        <begin position="322"/>
        <end position="327"/>
    </location>
</feature>
<protein>
    <recommendedName>
        <fullName evidence="1">Zinc transport protein ZntB</fullName>
    </recommendedName>
</protein>
<accession>C6DJ80</accession>
<keyword id="KW-0997">Cell inner membrane</keyword>
<keyword id="KW-1003">Cell membrane</keyword>
<keyword id="KW-0406">Ion transport</keyword>
<keyword id="KW-0472">Membrane</keyword>
<keyword id="KW-0812">Transmembrane</keyword>
<keyword id="KW-1133">Transmembrane helix</keyword>
<keyword id="KW-0813">Transport</keyword>
<keyword id="KW-0862">Zinc</keyword>
<evidence type="ECO:0000255" key="1">
    <source>
        <dbReference type="HAMAP-Rule" id="MF_01565"/>
    </source>
</evidence>